<feature type="chain" id="PRO_0000049907" description="Uncharacterized protein YtxK">
    <location>
        <begin position="1"/>
        <end position="329"/>
    </location>
</feature>
<protein>
    <recommendedName>
        <fullName>Uncharacterized protein YtxK</fullName>
    </recommendedName>
</protein>
<comment type="similarity">
    <text evidence="1">To type I restriction system adenine methylases.</text>
</comment>
<proteinExistence type="predicted"/>
<gene>
    <name type="primary">ytxK</name>
    <name type="synonym">ythI</name>
    <name type="ordered locus">BSU29480</name>
</gene>
<reference key="1">
    <citation type="journal article" date="1997" name="Microbiology">
        <title>Sequencing and functional annotation of the Bacillus subtilis genes in the 200 kb rrnB-dnaB region.</title>
        <authorList>
            <person name="Lapidus A."/>
            <person name="Galleron N."/>
            <person name="Sorokin A."/>
            <person name="Ehrlich S.D."/>
        </authorList>
    </citation>
    <scope>NUCLEOTIDE SEQUENCE [GENOMIC DNA]</scope>
    <source>
        <strain>168</strain>
    </source>
</reference>
<reference key="2">
    <citation type="journal article" date="1997" name="Nature">
        <title>The complete genome sequence of the Gram-positive bacterium Bacillus subtilis.</title>
        <authorList>
            <person name="Kunst F."/>
            <person name="Ogasawara N."/>
            <person name="Moszer I."/>
            <person name="Albertini A.M."/>
            <person name="Alloni G."/>
            <person name="Azevedo V."/>
            <person name="Bertero M.G."/>
            <person name="Bessieres P."/>
            <person name="Bolotin A."/>
            <person name="Borchert S."/>
            <person name="Borriss R."/>
            <person name="Boursier L."/>
            <person name="Brans A."/>
            <person name="Braun M."/>
            <person name="Brignell S.C."/>
            <person name="Bron S."/>
            <person name="Brouillet S."/>
            <person name="Bruschi C.V."/>
            <person name="Caldwell B."/>
            <person name="Capuano V."/>
            <person name="Carter N.M."/>
            <person name="Choi S.-K."/>
            <person name="Codani J.-J."/>
            <person name="Connerton I.F."/>
            <person name="Cummings N.J."/>
            <person name="Daniel R.A."/>
            <person name="Denizot F."/>
            <person name="Devine K.M."/>
            <person name="Duesterhoeft A."/>
            <person name="Ehrlich S.D."/>
            <person name="Emmerson P.T."/>
            <person name="Entian K.-D."/>
            <person name="Errington J."/>
            <person name="Fabret C."/>
            <person name="Ferrari E."/>
            <person name="Foulger D."/>
            <person name="Fritz C."/>
            <person name="Fujita M."/>
            <person name="Fujita Y."/>
            <person name="Fuma S."/>
            <person name="Galizzi A."/>
            <person name="Galleron N."/>
            <person name="Ghim S.-Y."/>
            <person name="Glaser P."/>
            <person name="Goffeau A."/>
            <person name="Golightly E.J."/>
            <person name="Grandi G."/>
            <person name="Guiseppi G."/>
            <person name="Guy B.J."/>
            <person name="Haga K."/>
            <person name="Haiech J."/>
            <person name="Harwood C.R."/>
            <person name="Henaut A."/>
            <person name="Hilbert H."/>
            <person name="Holsappel S."/>
            <person name="Hosono S."/>
            <person name="Hullo M.-F."/>
            <person name="Itaya M."/>
            <person name="Jones L.-M."/>
            <person name="Joris B."/>
            <person name="Karamata D."/>
            <person name="Kasahara Y."/>
            <person name="Klaerr-Blanchard M."/>
            <person name="Klein C."/>
            <person name="Kobayashi Y."/>
            <person name="Koetter P."/>
            <person name="Koningstein G."/>
            <person name="Krogh S."/>
            <person name="Kumano M."/>
            <person name="Kurita K."/>
            <person name="Lapidus A."/>
            <person name="Lardinois S."/>
            <person name="Lauber J."/>
            <person name="Lazarevic V."/>
            <person name="Lee S.-M."/>
            <person name="Levine A."/>
            <person name="Liu H."/>
            <person name="Masuda S."/>
            <person name="Mauel C."/>
            <person name="Medigue C."/>
            <person name="Medina N."/>
            <person name="Mellado R.P."/>
            <person name="Mizuno M."/>
            <person name="Moestl D."/>
            <person name="Nakai S."/>
            <person name="Noback M."/>
            <person name="Noone D."/>
            <person name="O'Reilly M."/>
            <person name="Ogawa K."/>
            <person name="Ogiwara A."/>
            <person name="Oudega B."/>
            <person name="Park S.-H."/>
            <person name="Parro V."/>
            <person name="Pohl T.M."/>
            <person name="Portetelle D."/>
            <person name="Porwollik S."/>
            <person name="Prescott A.M."/>
            <person name="Presecan E."/>
            <person name="Pujic P."/>
            <person name="Purnelle B."/>
            <person name="Rapoport G."/>
            <person name="Rey M."/>
            <person name="Reynolds S."/>
            <person name="Rieger M."/>
            <person name="Rivolta C."/>
            <person name="Rocha E."/>
            <person name="Roche B."/>
            <person name="Rose M."/>
            <person name="Sadaie Y."/>
            <person name="Sato T."/>
            <person name="Scanlan E."/>
            <person name="Schleich S."/>
            <person name="Schroeter R."/>
            <person name="Scoffone F."/>
            <person name="Sekiguchi J."/>
            <person name="Sekowska A."/>
            <person name="Seror S.J."/>
            <person name="Serror P."/>
            <person name="Shin B.-S."/>
            <person name="Soldo B."/>
            <person name="Sorokin A."/>
            <person name="Tacconi E."/>
            <person name="Takagi T."/>
            <person name="Takahashi H."/>
            <person name="Takemaru K."/>
            <person name="Takeuchi M."/>
            <person name="Tamakoshi A."/>
            <person name="Tanaka T."/>
            <person name="Terpstra P."/>
            <person name="Tognoni A."/>
            <person name="Tosato V."/>
            <person name="Uchiyama S."/>
            <person name="Vandenbol M."/>
            <person name="Vannier F."/>
            <person name="Vassarotti A."/>
            <person name="Viari A."/>
            <person name="Wambutt R."/>
            <person name="Wedler E."/>
            <person name="Wedler H."/>
            <person name="Weitzenegger T."/>
            <person name="Winters P."/>
            <person name="Wipat A."/>
            <person name="Yamamoto H."/>
            <person name="Yamane K."/>
            <person name="Yasumoto K."/>
            <person name="Yata K."/>
            <person name="Yoshida K."/>
            <person name="Yoshikawa H.-F."/>
            <person name="Zumstein E."/>
            <person name="Yoshikawa H."/>
            <person name="Danchin A."/>
        </authorList>
    </citation>
    <scope>NUCLEOTIDE SEQUENCE [LARGE SCALE GENOMIC DNA]</scope>
    <source>
        <strain>168</strain>
    </source>
</reference>
<reference key="3">
    <citation type="journal article" date="1993" name="J. Bacteriol.">
        <title>Regulation of the Bacillus subtilis acetate kinase gene by CcpA.</title>
        <authorList>
            <person name="Grundy F.J."/>
            <person name="Waters D.A."/>
            <person name="Allen S.H.G."/>
            <person name="Henkin T.M."/>
        </authorList>
    </citation>
    <scope>NUCLEOTIDE SEQUENCE [GENOMIC DNA] OF 215-329</scope>
    <source>
        <strain>168</strain>
    </source>
</reference>
<name>YTXK_BACSU</name>
<keyword id="KW-1185">Reference proteome</keyword>
<dbReference type="EMBL" id="AF008220">
    <property type="protein sequence ID" value="AAC00317.1"/>
    <property type="molecule type" value="Genomic_DNA"/>
</dbReference>
<dbReference type="EMBL" id="AL009126">
    <property type="protein sequence ID" value="CAB14926.1"/>
    <property type="molecule type" value="Genomic_DNA"/>
</dbReference>
<dbReference type="EMBL" id="L17320">
    <property type="protein sequence ID" value="AAC36856.1"/>
    <property type="molecule type" value="Unassigned_DNA"/>
</dbReference>
<dbReference type="PIR" id="G70003">
    <property type="entry name" value="G70003"/>
</dbReference>
<dbReference type="RefSeq" id="NP_390826.1">
    <property type="nucleotide sequence ID" value="NC_000964.3"/>
</dbReference>
<dbReference type="RefSeq" id="WP_003229346.1">
    <property type="nucleotide sequence ID" value="NZ_OZ025638.1"/>
</dbReference>
<dbReference type="SMR" id="P37876"/>
<dbReference type="FunCoup" id="P37876">
    <property type="interactions" value="60"/>
</dbReference>
<dbReference type="STRING" id="224308.BSU29480"/>
<dbReference type="jPOST" id="P37876"/>
<dbReference type="PaxDb" id="224308-BSU29480"/>
<dbReference type="EnsemblBacteria" id="CAB14926">
    <property type="protein sequence ID" value="CAB14926"/>
    <property type="gene ID" value="BSU_29480"/>
</dbReference>
<dbReference type="GeneID" id="938186"/>
<dbReference type="KEGG" id="bsu:BSU29480"/>
<dbReference type="PATRIC" id="fig|224308.179.peg.3203"/>
<dbReference type="eggNOG" id="COG0827">
    <property type="taxonomic scope" value="Bacteria"/>
</dbReference>
<dbReference type="InParanoid" id="P37876"/>
<dbReference type="OrthoDB" id="9788159at2"/>
<dbReference type="PhylomeDB" id="P37876"/>
<dbReference type="BioCyc" id="BSUB:BSU29480-MONOMER"/>
<dbReference type="Proteomes" id="UP000001570">
    <property type="component" value="Chromosome"/>
</dbReference>
<dbReference type="GO" id="GO:0003677">
    <property type="term" value="F:DNA binding"/>
    <property type="evidence" value="ECO:0007669"/>
    <property type="project" value="InterPro"/>
</dbReference>
<dbReference type="GO" id="GO:0008170">
    <property type="term" value="F:N-methyltransferase activity"/>
    <property type="evidence" value="ECO:0007669"/>
    <property type="project" value="InterPro"/>
</dbReference>
<dbReference type="CDD" id="cd02440">
    <property type="entry name" value="AdoMet_MTases"/>
    <property type="match status" value="1"/>
</dbReference>
<dbReference type="Gene3D" id="1.10.150.470">
    <property type="match status" value="1"/>
</dbReference>
<dbReference type="Gene3D" id="3.40.50.150">
    <property type="entry name" value="Vaccinia Virus protein VP39"/>
    <property type="match status" value="1"/>
</dbReference>
<dbReference type="InterPro" id="IPR003356">
    <property type="entry name" value="DNA_methylase_A-5"/>
</dbReference>
<dbReference type="InterPro" id="IPR052933">
    <property type="entry name" value="DNA_Protect_Modify"/>
</dbReference>
<dbReference type="InterPro" id="IPR016843">
    <property type="entry name" value="S-AdoMet-dep_Ade-MeTrfase_prd"/>
</dbReference>
<dbReference type="InterPro" id="IPR029063">
    <property type="entry name" value="SAM-dependent_MTases_sf"/>
</dbReference>
<dbReference type="InterPro" id="IPR048375">
    <property type="entry name" value="YtxK-like_N"/>
</dbReference>
<dbReference type="PANTHER" id="PTHR41313">
    <property type="entry name" value="ADENINE-SPECIFIC METHYLTRANSFERASE"/>
    <property type="match status" value="1"/>
</dbReference>
<dbReference type="PANTHER" id="PTHR41313:SF1">
    <property type="entry name" value="DNA METHYLASE ADENINE-SPECIFIC DOMAIN-CONTAINING PROTEIN"/>
    <property type="match status" value="1"/>
</dbReference>
<dbReference type="Pfam" id="PF02384">
    <property type="entry name" value="N6_Mtase"/>
    <property type="match status" value="1"/>
</dbReference>
<dbReference type="Pfam" id="PF21106">
    <property type="entry name" value="YtxK_like"/>
    <property type="match status" value="1"/>
</dbReference>
<dbReference type="PIRSF" id="PIRSF026567">
    <property type="entry name" value="Adenine_mtase_bact_prd"/>
    <property type="match status" value="1"/>
</dbReference>
<dbReference type="PRINTS" id="PR00507">
    <property type="entry name" value="N12N6MTFRASE"/>
</dbReference>
<dbReference type="SUPFAM" id="SSF53335">
    <property type="entry name" value="S-adenosyl-L-methionine-dependent methyltransferases"/>
    <property type="match status" value="1"/>
</dbReference>
<organism>
    <name type="scientific">Bacillus subtilis (strain 168)</name>
    <dbReference type="NCBI Taxonomy" id="224308"/>
    <lineage>
        <taxon>Bacteria</taxon>
        <taxon>Bacillati</taxon>
        <taxon>Bacillota</taxon>
        <taxon>Bacilli</taxon>
        <taxon>Bacillales</taxon>
        <taxon>Bacillaceae</taxon>
        <taxon>Bacillus</taxon>
    </lineage>
</organism>
<evidence type="ECO:0000305" key="1"/>
<sequence>MQKDHVGAVYELLNEAAIMIKNELQISYIEALAEAGEMYFLEKTDQLKLPADQKTKQLQALLEKAEFGTYEHEWVRKAFQLAVLKGMKDISHPNRQMTPDTIGLFISYLVNKFMADKKELTILDPALGTGNLLFTVLNQLSEKTANSFGIEIDDVLLKIAYAQANLLKKELELFHQDSLEPLFIDPVDTVICDLPVGYYPNDEGAEAFELKADEGHSFAHHLFIEQSVKHTKPGGYLFFMIPNHLFESSQSGKLKQFFKDKVHINALLQLPKSIFKDEAHAKSILVLQKQGENTKAPGQILLANLPSFSNQKAMLDMMAQFDEWFKKEK</sequence>
<accession>P37876</accession>